<name>HESB1_TRIV2</name>
<feature type="chain" id="PRO_0000076984" description="Protein HesB, heterocyst">
    <location>
        <begin position="1"/>
        <end position="123"/>
    </location>
</feature>
<dbReference type="EMBL" id="Z46887">
    <property type="protein sequence ID" value="CAA86985.1"/>
    <property type="molecule type" value="Genomic_DNA"/>
</dbReference>
<dbReference type="EMBL" id="CP000117">
    <property type="protein sequence ID" value="ABA23544.1"/>
    <property type="molecule type" value="Genomic_DNA"/>
</dbReference>
<dbReference type="PIR" id="S70243">
    <property type="entry name" value="S70243"/>
</dbReference>
<dbReference type="SMR" id="P46051"/>
<dbReference type="STRING" id="240292.Ava_3939"/>
<dbReference type="KEGG" id="ava:Ava_3939"/>
<dbReference type="eggNOG" id="COG0316">
    <property type="taxonomic scope" value="Bacteria"/>
</dbReference>
<dbReference type="HOGENOM" id="CLU_069054_5_1_3"/>
<dbReference type="Proteomes" id="UP000002533">
    <property type="component" value="Chromosome"/>
</dbReference>
<dbReference type="GO" id="GO:0051537">
    <property type="term" value="F:2 iron, 2 sulfur cluster binding"/>
    <property type="evidence" value="ECO:0007669"/>
    <property type="project" value="UniProtKB-ARBA"/>
</dbReference>
<dbReference type="GO" id="GO:0051539">
    <property type="term" value="F:4 iron, 4 sulfur cluster binding"/>
    <property type="evidence" value="ECO:0007669"/>
    <property type="project" value="TreeGrafter"/>
</dbReference>
<dbReference type="GO" id="GO:0005506">
    <property type="term" value="F:iron ion binding"/>
    <property type="evidence" value="ECO:0007669"/>
    <property type="project" value="TreeGrafter"/>
</dbReference>
<dbReference type="GO" id="GO:0043158">
    <property type="term" value="P:heterocyst development"/>
    <property type="evidence" value="ECO:0007669"/>
    <property type="project" value="UniProtKB-KW"/>
</dbReference>
<dbReference type="GO" id="GO:0016226">
    <property type="term" value="P:iron-sulfur cluster assembly"/>
    <property type="evidence" value="ECO:0007669"/>
    <property type="project" value="InterPro"/>
</dbReference>
<dbReference type="GO" id="GO:0009399">
    <property type="term" value="P:nitrogen fixation"/>
    <property type="evidence" value="ECO:0007669"/>
    <property type="project" value="UniProtKB-KW"/>
</dbReference>
<dbReference type="Gene3D" id="2.60.300.12">
    <property type="entry name" value="HesB-like domain"/>
    <property type="match status" value="1"/>
</dbReference>
<dbReference type="InterPro" id="IPR000361">
    <property type="entry name" value="FeS_biogenesis"/>
</dbReference>
<dbReference type="InterPro" id="IPR016092">
    <property type="entry name" value="FeS_cluster_insertion"/>
</dbReference>
<dbReference type="InterPro" id="IPR017870">
    <property type="entry name" value="FeS_cluster_insertion_CS"/>
</dbReference>
<dbReference type="InterPro" id="IPR035903">
    <property type="entry name" value="HesB-like_dom_sf"/>
</dbReference>
<dbReference type="NCBIfam" id="TIGR00049">
    <property type="entry name" value="iron-sulfur cluster assembly accessory protein"/>
    <property type="match status" value="1"/>
</dbReference>
<dbReference type="PANTHER" id="PTHR43011">
    <property type="entry name" value="IRON-SULFUR CLUSTER ASSEMBLY 2 HOMOLOG, MITOCHONDRIAL"/>
    <property type="match status" value="1"/>
</dbReference>
<dbReference type="PANTHER" id="PTHR43011:SF1">
    <property type="entry name" value="IRON-SULFUR CLUSTER ASSEMBLY 2 HOMOLOG, MITOCHONDRIAL"/>
    <property type="match status" value="1"/>
</dbReference>
<dbReference type="Pfam" id="PF01521">
    <property type="entry name" value="Fe-S_biosyn"/>
    <property type="match status" value="1"/>
</dbReference>
<dbReference type="SUPFAM" id="SSF89360">
    <property type="entry name" value="HesB-like domain"/>
    <property type="match status" value="1"/>
</dbReference>
<dbReference type="PROSITE" id="PS01152">
    <property type="entry name" value="HESB"/>
    <property type="match status" value="1"/>
</dbReference>
<comment type="function">
    <text>May be required for efficient nitrogen fixation.</text>
</comment>
<comment type="developmental stage">
    <text>Expressed exclusively within heterocysts.</text>
</comment>
<comment type="similarity">
    <text evidence="1">Belongs to the HesB/IscA family.</text>
</comment>
<proteinExistence type="evidence at transcript level"/>
<accession>P46051</accession>
<accession>Q3M642</accession>
<sequence length="123" mass="13037">MTVTLTEKAEFRLRAFLRGSAKDANETTKGIRISVKDGGCSGYEYLMDVTSQPQPDDLVSQQGSVLVYVDAKSAPLLEGIVIDFVEGLVESGFKFTNPNATSTCGCGKSFKAGDCSPEGVPCS</sequence>
<evidence type="ECO:0000305" key="1"/>
<organism>
    <name type="scientific">Trichormus variabilis (strain ATCC 29413 / PCC 7937)</name>
    <name type="common">Anabaena variabilis</name>
    <dbReference type="NCBI Taxonomy" id="240292"/>
    <lineage>
        <taxon>Bacteria</taxon>
        <taxon>Bacillati</taxon>
        <taxon>Cyanobacteriota</taxon>
        <taxon>Cyanophyceae</taxon>
        <taxon>Nostocales</taxon>
        <taxon>Nostocaceae</taxon>
        <taxon>Trichormus</taxon>
    </lineage>
</organism>
<gene>
    <name type="primary">hesB1</name>
    <name type="ordered locus">Ava_3939</name>
</gene>
<reference key="1">
    <citation type="journal article" date="1995" name="Mol. Microbiol.">
        <title>Distinct and differently regulated Mo-dependent nitrogen-fixing systems evolved for heterocysts and vegetative cells of Anabaena variabilis ATCC 29413: characterization of the fdxH1/2 gene regions as part of the nif1/2 gene clusters.</title>
        <authorList>
            <person name="Schrautemeier B."/>
            <person name="Neveling U."/>
            <person name="Schmitz S."/>
        </authorList>
    </citation>
    <scope>NUCLEOTIDE SEQUENCE [GENOMIC DNA]</scope>
</reference>
<reference key="2">
    <citation type="journal article" date="2014" name="Stand. Genomic Sci.">
        <title>Complete genome sequence of Anabaena variabilis ATCC 29413.</title>
        <authorList>
            <person name="Thiel T."/>
            <person name="Pratte B.S."/>
            <person name="Zhong J."/>
            <person name="Goodwin L."/>
            <person name="Copeland A."/>
            <person name="Lucas S."/>
            <person name="Han C."/>
            <person name="Pitluck S."/>
            <person name="Land M.L."/>
            <person name="Kyrpides N.C."/>
            <person name="Woyke T."/>
        </authorList>
    </citation>
    <scope>NUCLEOTIDE SEQUENCE [LARGE SCALE GENOMIC DNA]</scope>
    <source>
        <strain>ATCC 29413 / PCC 7937</strain>
    </source>
</reference>
<keyword id="KW-0364">Heterocyst</keyword>
<keyword id="KW-0535">Nitrogen fixation</keyword>
<protein>
    <recommendedName>
        <fullName>Protein HesB, heterocyst</fullName>
    </recommendedName>
</protein>